<organism>
    <name type="scientific">Solanum lycopersicum</name>
    <name type="common">Tomato</name>
    <name type="synonym">Lycopersicon esculentum</name>
    <dbReference type="NCBI Taxonomy" id="4081"/>
    <lineage>
        <taxon>Eukaryota</taxon>
        <taxon>Viridiplantae</taxon>
        <taxon>Streptophyta</taxon>
        <taxon>Embryophyta</taxon>
        <taxon>Tracheophyta</taxon>
        <taxon>Spermatophyta</taxon>
        <taxon>Magnoliopsida</taxon>
        <taxon>eudicotyledons</taxon>
        <taxon>Gunneridae</taxon>
        <taxon>Pentapetalae</taxon>
        <taxon>asterids</taxon>
        <taxon>lamiids</taxon>
        <taxon>Solanales</taxon>
        <taxon>Solanaceae</taxon>
        <taxon>Solanoideae</taxon>
        <taxon>Solaneae</taxon>
        <taxon>Solanum</taxon>
        <taxon>Solanum subgen. Lycopersicon</taxon>
    </lineage>
</organism>
<name>DFRA_SOLLC</name>
<reference key="1">
    <citation type="journal article" date="1994" name="Gene">
        <title>Characterization of the gene encoding dihydroflavonol 4-reductase in tomato.</title>
        <authorList>
            <person name="Bongue-Bartelsman M."/>
            <person name="O'Neill S.D."/>
            <person name="Tong Y."/>
            <person name="Yoder J.I."/>
        </authorList>
    </citation>
    <scope>NUCLEOTIDE SEQUENCE [MRNA]</scope>
    <source>
        <tissue>Hypocotyl</tissue>
    </source>
</reference>
<feature type="chain" id="PRO_0000215568" description="Dihydroflavonol 4-reductase">
    <location>
        <begin position="1"/>
        <end position="379"/>
    </location>
</feature>
<feature type="binding site" evidence="1">
    <location>
        <position position="56"/>
    </location>
    <ligand>
        <name>NADP(+)</name>
        <dbReference type="ChEBI" id="CHEBI:58349"/>
    </ligand>
</feature>
<feature type="binding site" evidence="1">
    <location>
        <position position="175"/>
    </location>
    <ligand>
        <name>NADP(+)</name>
        <dbReference type="ChEBI" id="CHEBI:58349"/>
    </ligand>
</feature>
<comment type="function">
    <text evidence="2">Bifunctional enzyme involved in flavonoid metabolism.</text>
</comment>
<comment type="catalytic activity">
    <reaction evidence="2">
        <text>a (2R,3S,4S)-leucoanthocyanidin + NADP(+) = a (2R,3R)-dihydroflavonol + NADPH + H(+)</text>
        <dbReference type="Rhea" id="RHEA:54444"/>
        <dbReference type="ChEBI" id="CHEBI:15378"/>
        <dbReference type="ChEBI" id="CHEBI:57783"/>
        <dbReference type="ChEBI" id="CHEBI:58349"/>
        <dbReference type="ChEBI" id="CHEBI:138176"/>
        <dbReference type="ChEBI" id="CHEBI:138188"/>
        <dbReference type="EC" id="1.1.1.219"/>
    </reaction>
</comment>
<comment type="catalytic activity">
    <reaction evidence="2">
        <text>(2S)-flavan-4-ol + NADP(+) = (2S)-flavanone + NADPH + H(+)</text>
        <dbReference type="Rhea" id="RHEA:11228"/>
        <dbReference type="ChEBI" id="CHEBI:15378"/>
        <dbReference type="ChEBI" id="CHEBI:15605"/>
        <dbReference type="ChEBI" id="CHEBI:15606"/>
        <dbReference type="ChEBI" id="CHEBI:57783"/>
        <dbReference type="ChEBI" id="CHEBI:58349"/>
        <dbReference type="EC" id="1.1.1.234"/>
    </reaction>
</comment>
<comment type="pathway">
    <text>Pigment biosynthesis; anthocyanin biosynthesis.</text>
</comment>
<comment type="tissue specificity">
    <text>Expressed in both leaf and hypocotyl tissues.</text>
</comment>
<comment type="similarity">
    <text evidence="3">Belongs to the NAD(P)-dependent epimerase/dehydratase family. Dihydroflavonol-4-reductase subfamily.</text>
</comment>
<evidence type="ECO:0000250" key="1">
    <source>
        <dbReference type="UniProtKB" id="A0A059TC02"/>
    </source>
</evidence>
<evidence type="ECO:0000250" key="2">
    <source>
        <dbReference type="UniProtKB" id="Q9XES5"/>
    </source>
</evidence>
<evidence type="ECO:0000305" key="3"/>
<keyword id="KW-0284">Flavonoid biosynthesis</keyword>
<keyword id="KW-0521">NADP</keyword>
<keyword id="KW-0560">Oxidoreductase</keyword>
<keyword id="KW-1185">Reference proteome</keyword>
<accession>P51107</accession>
<proteinExistence type="evidence at transcript level"/>
<protein>
    <recommendedName>
        <fullName>Dihydroflavonol 4-reductase</fullName>
        <shortName>DFR</shortName>
        <ecNumber evidence="2">1.1.1.219</ecNumber>
    </recommendedName>
    <alternativeName>
        <fullName>Dihydrokaempferol 4-reductase</fullName>
    </alternativeName>
    <alternativeName>
        <fullName>Flavanone 4-reductase</fullName>
        <shortName>FNR</shortName>
        <ecNumber evidence="2">1.1.1.234</ecNumber>
    </alternativeName>
</protein>
<sequence>MASEAHAVVDAHSPPKTTTVWVTGGAGFIGSWLVMRLLERGYNVHATVRDPENQKKVKHLLELPKADTNLTLWKADLAVEGSFDEAIQGCQGVFHVATPMDFESKDPENEVIKPTVRGMLSIIESCAKANTVKRLVFTSSAGTLDVQEDQKLFYDETSWSDLDFIYAKKMTGWMYFVSKILAEKAAMEEARKNNIDFISIIPPLVVGPFITSTFPPSLITALSLITAHYGIIKQGQYVHLDDLCEAHIFLYEHPKAEGRFICSSHHAIIYDVAKMVRQKWPEYYVPTEFKGIDKDLALVSFSSKKLMDIKFQFKHTLEDMYKGAIETCRQKQLLPFSTRSTADNGKDKEAIPISTENYSSGKENAPVANCTGKFTNGEI</sequence>
<dbReference type="EC" id="1.1.1.219" evidence="2"/>
<dbReference type="EC" id="1.1.1.234" evidence="2"/>
<dbReference type="EMBL" id="Z18277">
    <property type="protein sequence ID" value="CAA79154.1"/>
    <property type="molecule type" value="mRNA"/>
</dbReference>
<dbReference type="PIR" id="S38474">
    <property type="entry name" value="S38474"/>
</dbReference>
<dbReference type="RefSeq" id="NP_001234408.1">
    <property type="nucleotide sequence ID" value="NM_001247479.1"/>
</dbReference>
<dbReference type="SMR" id="P51107"/>
<dbReference type="FunCoup" id="P51107">
    <property type="interactions" value="146"/>
</dbReference>
<dbReference type="STRING" id="4081.P51107"/>
<dbReference type="PaxDb" id="4081-Solyc02g085020.2.1"/>
<dbReference type="GeneID" id="544150"/>
<dbReference type="KEGG" id="sly:544150"/>
<dbReference type="eggNOG" id="KOG1502">
    <property type="taxonomic scope" value="Eukaryota"/>
</dbReference>
<dbReference type="InParanoid" id="P51107"/>
<dbReference type="OrthoDB" id="2735536at2759"/>
<dbReference type="BRENDA" id="1.1.1.219">
    <property type="organism ID" value="3101"/>
</dbReference>
<dbReference type="UniPathway" id="UPA00009"/>
<dbReference type="Proteomes" id="UP000004994">
    <property type="component" value="Unplaced"/>
</dbReference>
<dbReference type="ExpressionAtlas" id="P51107">
    <property type="expression patterns" value="baseline and differential"/>
</dbReference>
<dbReference type="GO" id="GO:0045552">
    <property type="term" value="F:dihydrokaempferol 4-reductase activity"/>
    <property type="evidence" value="ECO:0000318"/>
    <property type="project" value="GO_Central"/>
</dbReference>
<dbReference type="GO" id="GO:0047890">
    <property type="term" value="F:flavanone 4-reductase activity"/>
    <property type="evidence" value="ECO:0007669"/>
    <property type="project" value="UniProtKB-EC"/>
</dbReference>
<dbReference type="GO" id="GO:0009718">
    <property type="term" value="P:anthocyanin-containing compound biosynthetic process"/>
    <property type="evidence" value="ECO:0000318"/>
    <property type="project" value="GO_Central"/>
</dbReference>
<dbReference type="CDD" id="cd08958">
    <property type="entry name" value="FR_SDR_e"/>
    <property type="match status" value="1"/>
</dbReference>
<dbReference type="FunFam" id="3.40.50.720:FF:000085">
    <property type="entry name" value="Dihydroflavonol reductase"/>
    <property type="match status" value="1"/>
</dbReference>
<dbReference type="Gene3D" id="3.40.50.720">
    <property type="entry name" value="NAD(P)-binding Rossmann-like Domain"/>
    <property type="match status" value="1"/>
</dbReference>
<dbReference type="InterPro" id="IPR001509">
    <property type="entry name" value="Epimerase_deHydtase"/>
</dbReference>
<dbReference type="InterPro" id="IPR036291">
    <property type="entry name" value="NAD(P)-bd_dom_sf"/>
</dbReference>
<dbReference type="InterPro" id="IPR050425">
    <property type="entry name" value="NAD(P)_dehydrat-like"/>
</dbReference>
<dbReference type="PANTHER" id="PTHR10366">
    <property type="entry name" value="NAD DEPENDENT EPIMERASE/DEHYDRATASE"/>
    <property type="match status" value="1"/>
</dbReference>
<dbReference type="PANTHER" id="PTHR10366:SF564">
    <property type="entry name" value="STEROL-4-ALPHA-CARBOXYLATE 3-DEHYDROGENASE, DECARBOXYLATING"/>
    <property type="match status" value="1"/>
</dbReference>
<dbReference type="Pfam" id="PF01370">
    <property type="entry name" value="Epimerase"/>
    <property type="match status" value="1"/>
</dbReference>
<dbReference type="SUPFAM" id="SSF51735">
    <property type="entry name" value="NAD(P)-binding Rossmann-fold domains"/>
    <property type="match status" value="1"/>
</dbReference>